<comment type="function">
    <text evidence="1">One of the primary rRNA binding proteins, it binds directly to 16S rRNA central domain where it helps coordinate assembly of the platform of the 30S subunit.</text>
</comment>
<comment type="subunit">
    <text evidence="1">Part of the 30S ribosomal subunit. Contacts proteins S5 and S12.</text>
</comment>
<comment type="similarity">
    <text evidence="1">Belongs to the universal ribosomal protein uS8 family.</text>
</comment>
<name>RS8_PROM0</name>
<dbReference type="EMBL" id="CP000576">
    <property type="protein sequence ID" value="ABO18359.1"/>
    <property type="molecule type" value="Genomic_DNA"/>
</dbReference>
<dbReference type="RefSeq" id="WP_011863651.1">
    <property type="nucleotide sequence ID" value="NC_009091.1"/>
</dbReference>
<dbReference type="SMR" id="A3PF34"/>
<dbReference type="STRING" id="167546.P9301_17361"/>
<dbReference type="KEGG" id="pmg:P9301_17361"/>
<dbReference type="eggNOG" id="COG0096">
    <property type="taxonomic scope" value="Bacteria"/>
</dbReference>
<dbReference type="HOGENOM" id="CLU_098428_0_2_3"/>
<dbReference type="OrthoDB" id="9802617at2"/>
<dbReference type="Proteomes" id="UP000001430">
    <property type="component" value="Chromosome"/>
</dbReference>
<dbReference type="GO" id="GO:1990904">
    <property type="term" value="C:ribonucleoprotein complex"/>
    <property type="evidence" value="ECO:0007669"/>
    <property type="project" value="UniProtKB-KW"/>
</dbReference>
<dbReference type="GO" id="GO:0005840">
    <property type="term" value="C:ribosome"/>
    <property type="evidence" value="ECO:0007669"/>
    <property type="project" value="UniProtKB-KW"/>
</dbReference>
<dbReference type="GO" id="GO:0019843">
    <property type="term" value="F:rRNA binding"/>
    <property type="evidence" value="ECO:0007669"/>
    <property type="project" value="UniProtKB-UniRule"/>
</dbReference>
<dbReference type="GO" id="GO:0003735">
    <property type="term" value="F:structural constituent of ribosome"/>
    <property type="evidence" value="ECO:0007669"/>
    <property type="project" value="InterPro"/>
</dbReference>
<dbReference type="GO" id="GO:0006412">
    <property type="term" value="P:translation"/>
    <property type="evidence" value="ECO:0007669"/>
    <property type="project" value="UniProtKB-UniRule"/>
</dbReference>
<dbReference type="FunFam" id="3.30.1370.30:FF:000002">
    <property type="entry name" value="30S ribosomal protein S8"/>
    <property type="match status" value="1"/>
</dbReference>
<dbReference type="FunFam" id="3.30.1490.10:FF:000001">
    <property type="entry name" value="30S ribosomal protein S8"/>
    <property type="match status" value="1"/>
</dbReference>
<dbReference type="Gene3D" id="3.30.1370.30">
    <property type="match status" value="1"/>
</dbReference>
<dbReference type="Gene3D" id="3.30.1490.10">
    <property type="match status" value="1"/>
</dbReference>
<dbReference type="HAMAP" id="MF_01302_B">
    <property type="entry name" value="Ribosomal_uS8_B"/>
    <property type="match status" value="1"/>
</dbReference>
<dbReference type="InterPro" id="IPR000630">
    <property type="entry name" value="Ribosomal_uS8"/>
</dbReference>
<dbReference type="InterPro" id="IPR047863">
    <property type="entry name" value="Ribosomal_uS8_CS"/>
</dbReference>
<dbReference type="InterPro" id="IPR035987">
    <property type="entry name" value="Ribosomal_uS8_sf"/>
</dbReference>
<dbReference type="NCBIfam" id="NF001109">
    <property type="entry name" value="PRK00136.1"/>
    <property type="match status" value="1"/>
</dbReference>
<dbReference type="PANTHER" id="PTHR11758">
    <property type="entry name" value="40S RIBOSOMAL PROTEIN S15A"/>
    <property type="match status" value="1"/>
</dbReference>
<dbReference type="Pfam" id="PF00410">
    <property type="entry name" value="Ribosomal_S8"/>
    <property type="match status" value="1"/>
</dbReference>
<dbReference type="SUPFAM" id="SSF56047">
    <property type="entry name" value="Ribosomal protein S8"/>
    <property type="match status" value="1"/>
</dbReference>
<dbReference type="PROSITE" id="PS00053">
    <property type="entry name" value="RIBOSOMAL_S8"/>
    <property type="match status" value="1"/>
</dbReference>
<gene>
    <name evidence="1" type="primary">rpsH</name>
    <name evidence="1" type="synonym">rps8</name>
    <name type="ordered locus">P9301_17361</name>
</gene>
<keyword id="KW-1185">Reference proteome</keyword>
<keyword id="KW-0687">Ribonucleoprotein</keyword>
<keyword id="KW-0689">Ribosomal protein</keyword>
<keyword id="KW-0694">RNA-binding</keyword>
<keyword id="KW-0699">rRNA-binding</keyword>
<sequence>MSNHDPISDMLTRIRNASQKKHTTTSIPSSKMSLSIAKVLQKEGFISDINEEGEGYKSQIILGLKYSGKNKFPTIRSMQRVSKPGLRIYKNTRALPKVLGGLGVAIISTSKGVMSDRDARKQGIGGEVLCYVY</sequence>
<accession>A3PF34</accession>
<feature type="chain" id="PRO_0000290899" description="Small ribosomal subunit protein uS8">
    <location>
        <begin position="1"/>
        <end position="133"/>
    </location>
</feature>
<protein>
    <recommendedName>
        <fullName evidence="1">Small ribosomal subunit protein uS8</fullName>
    </recommendedName>
    <alternativeName>
        <fullName evidence="2">30S ribosomal protein S8</fullName>
    </alternativeName>
</protein>
<reference key="1">
    <citation type="journal article" date="2007" name="PLoS Genet.">
        <title>Patterns and implications of gene gain and loss in the evolution of Prochlorococcus.</title>
        <authorList>
            <person name="Kettler G.C."/>
            <person name="Martiny A.C."/>
            <person name="Huang K."/>
            <person name="Zucker J."/>
            <person name="Coleman M.L."/>
            <person name="Rodrigue S."/>
            <person name="Chen F."/>
            <person name="Lapidus A."/>
            <person name="Ferriera S."/>
            <person name="Johnson J."/>
            <person name="Steglich C."/>
            <person name="Church G.M."/>
            <person name="Richardson P."/>
            <person name="Chisholm S.W."/>
        </authorList>
    </citation>
    <scope>NUCLEOTIDE SEQUENCE [LARGE SCALE GENOMIC DNA]</scope>
    <source>
        <strain>MIT 9301</strain>
    </source>
</reference>
<organism>
    <name type="scientific">Prochlorococcus marinus (strain MIT 9301)</name>
    <dbReference type="NCBI Taxonomy" id="167546"/>
    <lineage>
        <taxon>Bacteria</taxon>
        <taxon>Bacillati</taxon>
        <taxon>Cyanobacteriota</taxon>
        <taxon>Cyanophyceae</taxon>
        <taxon>Synechococcales</taxon>
        <taxon>Prochlorococcaceae</taxon>
        <taxon>Prochlorococcus</taxon>
    </lineage>
</organism>
<proteinExistence type="inferred from homology"/>
<evidence type="ECO:0000255" key="1">
    <source>
        <dbReference type="HAMAP-Rule" id="MF_01302"/>
    </source>
</evidence>
<evidence type="ECO:0000305" key="2"/>